<dbReference type="EC" id="2.3.1.129" evidence="1"/>
<dbReference type="EMBL" id="AL111168">
    <property type="protein sequence ID" value="CAL34428.1"/>
    <property type="molecule type" value="Genomic_DNA"/>
</dbReference>
<dbReference type="PIR" id="A81446">
    <property type="entry name" value="A81446"/>
</dbReference>
<dbReference type="RefSeq" id="WP_002851756.1">
    <property type="nucleotide sequence ID" value="NZ_SZUC01000004.1"/>
</dbReference>
<dbReference type="RefSeq" id="YP_002343716.1">
    <property type="nucleotide sequence ID" value="NC_002163.1"/>
</dbReference>
<dbReference type="PDB" id="3R0S">
    <property type="method" value="X-ray"/>
    <property type="resolution" value="2.30 A"/>
    <property type="chains" value="A=1-263"/>
</dbReference>
<dbReference type="PDBsum" id="3R0S"/>
<dbReference type="SMR" id="Q9PIM1"/>
<dbReference type="IntAct" id="Q9PIM1">
    <property type="interactions" value="29"/>
</dbReference>
<dbReference type="STRING" id="192222.Cj0274"/>
<dbReference type="PaxDb" id="192222-Cj0274"/>
<dbReference type="EnsemblBacteria" id="CAL34428">
    <property type="protein sequence ID" value="CAL34428"/>
    <property type="gene ID" value="Cj0274"/>
</dbReference>
<dbReference type="GeneID" id="904599"/>
<dbReference type="KEGG" id="cje:Cj0274"/>
<dbReference type="PATRIC" id="fig|192222.6.peg.268"/>
<dbReference type="eggNOG" id="COG1043">
    <property type="taxonomic scope" value="Bacteria"/>
</dbReference>
<dbReference type="HOGENOM" id="CLU_061249_0_0_7"/>
<dbReference type="OrthoDB" id="9807278at2"/>
<dbReference type="UniPathway" id="UPA00359">
    <property type="reaction ID" value="UER00477"/>
</dbReference>
<dbReference type="EvolutionaryTrace" id="Q9PIM1"/>
<dbReference type="Proteomes" id="UP000000799">
    <property type="component" value="Chromosome"/>
</dbReference>
<dbReference type="GO" id="GO:0005737">
    <property type="term" value="C:cytoplasm"/>
    <property type="evidence" value="ECO:0007669"/>
    <property type="project" value="UniProtKB-SubCell"/>
</dbReference>
<dbReference type="GO" id="GO:0016020">
    <property type="term" value="C:membrane"/>
    <property type="evidence" value="ECO:0007669"/>
    <property type="project" value="GOC"/>
</dbReference>
<dbReference type="GO" id="GO:0008780">
    <property type="term" value="F:acyl-[acyl-carrier-protein]-UDP-N-acetylglucosamine O-acyltransferase activity"/>
    <property type="evidence" value="ECO:0007669"/>
    <property type="project" value="UniProtKB-UniRule"/>
</dbReference>
<dbReference type="GO" id="GO:0009245">
    <property type="term" value="P:lipid A biosynthetic process"/>
    <property type="evidence" value="ECO:0007669"/>
    <property type="project" value="UniProtKB-UniRule"/>
</dbReference>
<dbReference type="CDD" id="cd03351">
    <property type="entry name" value="LbH_UDP-GlcNAc_AT"/>
    <property type="match status" value="1"/>
</dbReference>
<dbReference type="Gene3D" id="2.160.10.10">
    <property type="entry name" value="Hexapeptide repeat proteins"/>
    <property type="match status" value="1"/>
</dbReference>
<dbReference type="Gene3D" id="1.20.1180.10">
    <property type="entry name" value="Udp N-acetylglucosamine O-acyltransferase, C-terminal domain"/>
    <property type="match status" value="1"/>
</dbReference>
<dbReference type="HAMAP" id="MF_00387">
    <property type="entry name" value="LpxA"/>
    <property type="match status" value="1"/>
</dbReference>
<dbReference type="InterPro" id="IPR029098">
    <property type="entry name" value="Acetyltransf_C"/>
</dbReference>
<dbReference type="InterPro" id="IPR037157">
    <property type="entry name" value="Acetyltransf_C_sf"/>
</dbReference>
<dbReference type="InterPro" id="IPR001451">
    <property type="entry name" value="Hexapep"/>
</dbReference>
<dbReference type="InterPro" id="IPR018357">
    <property type="entry name" value="Hexapep_transf_CS"/>
</dbReference>
<dbReference type="InterPro" id="IPR010137">
    <property type="entry name" value="Lipid_A_LpxA"/>
</dbReference>
<dbReference type="InterPro" id="IPR011004">
    <property type="entry name" value="Trimer_LpxA-like_sf"/>
</dbReference>
<dbReference type="NCBIfam" id="TIGR01852">
    <property type="entry name" value="lipid_A_lpxA"/>
    <property type="match status" value="1"/>
</dbReference>
<dbReference type="NCBIfam" id="NF003657">
    <property type="entry name" value="PRK05289.1"/>
    <property type="match status" value="1"/>
</dbReference>
<dbReference type="PANTHER" id="PTHR43480">
    <property type="entry name" value="ACYL-[ACYL-CARRIER-PROTEIN]--UDP-N-ACETYLGLUCOSAMINE O-ACYLTRANSFERASE"/>
    <property type="match status" value="1"/>
</dbReference>
<dbReference type="PANTHER" id="PTHR43480:SF1">
    <property type="entry name" value="ACYL-[ACYL-CARRIER-PROTEIN]--UDP-N-ACETYLGLUCOSAMINE O-ACYLTRANSFERASE, MITOCHONDRIAL-RELATED"/>
    <property type="match status" value="1"/>
</dbReference>
<dbReference type="Pfam" id="PF13720">
    <property type="entry name" value="Acetyltransf_11"/>
    <property type="match status" value="1"/>
</dbReference>
<dbReference type="Pfam" id="PF00132">
    <property type="entry name" value="Hexapep"/>
    <property type="match status" value="1"/>
</dbReference>
<dbReference type="PIRSF" id="PIRSF000456">
    <property type="entry name" value="UDP-GlcNAc_acltr"/>
    <property type="match status" value="1"/>
</dbReference>
<dbReference type="SUPFAM" id="SSF51161">
    <property type="entry name" value="Trimeric LpxA-like enzymes"/>
    <property type="match status" value="1"/>
</dbReference>
<dbReference type="PROSITE" id="PS00101">
    <property type="entry name" value="HEXAPEP_TRANSFERASES"/>
    <property type="match status" value="1"/>
</dbReference>
<keyword id="KW-0002">3D-structure</keyword>
<keyword id="KW-0012">Acyltransferase</keyword>
<keyword id="KW-0963">Cytoplasm</keyword>
<keyword id="KW-0441">Lipid A biosynthesis</keyword>
<keyword id="KW-0444">Lipid biosynthesis</keyword>
<keyword id="KW-0443">Lipid metabolism</keyword>
<keyword id="KW-1185">Reference proteome</keyword>
<keyword id="KW-0677">Repeat</keyword>
<keyword id="KW-0808">Transferase</keyword>
<feature type="chain" id="PRO_0000188038" description="Acyl-[acyl-carrier-protein]--UDP-N-acetylglucosamine O-acyltransferase">
    <location>
        <begin position="1"/>
        <end position="263"/>
    </location>
</feature>
<feature type="strand" evidence="2">
    <location>
        <begin position="63"/>
        <end position="66"/>
    </location>
</feature>
<feature type="strand" evidence="2">
    <location>
        <begin position="80"/>
        <end position="83"/>
    </location>
</feature>
<feature type="strand" evidence="2">
    <location>
        <begin position="94"/>
        <end position="96"/>
    </location>
</feature>
<feature type="turn" evidence="2">
    <location>
        <begin position="100"/>
        <end position="103"/>
    </location>
</feature>
<feature type="strand" evidence="2">
    <location>
        <begin position="104"/>
        <end position="108"/>
    </location>
</feature>
<feature type="strand" evidence="2">
    <location>
        <begin position="182"/>
        <end position="185"/>
    </location>
</feature>
<feature type="strand" evidence="2">
    <location>
        <begin position="190"/>
        <end position="194"/>
    </location>
</feature>
<feature type="helix" evidence="2">
    <location>
        <begin position="196"/>
        <end position="202"/>
    </location>
</feature>
<feature type="helix" evidence="2">
    <location>
        <begin position="205"/>
        <end position="219"/>
    </location>
</feature>
<feature type="strand" evidence="2">
    <location>
        <begin position="220"/>
        <end position="222"/>
    </location>
</feature>
<feature type="helix" evidence="2">
    <location>
        <begin position="224"/>
        <end position="232"/>
    </location>
</feature>
<feature type="helix" evidence="2">
    <location>
        <begin position="238"/>
        <end position="249"/>
    </location>
</feature>
<comment type="function">
    <text evidence="1">Involved in the biosynthesis of lipid A, a phosphorylated glycolipid that anchors the lipopolysaccharide to the outer membrane of the cell.</text>
</comment>
<comment type="catalytic activity">
    <reaction evidence="1">
        <text>a (3R)-hydroxyacyl-[ACP] + UDP-N-acetyl-alpha-D-glucosamine = a UDP-3-O-[(3R)-3-hydroxyacyl]-N-acetyl-alpha-D-glucosamine + holo-[ACP]</text>
        <dbReference type="Rhea" id="RHEA:67812"/>
        <dbReference type="Rhea" id="RHEA-COMP:9685"/>
        <dbReference type="Rhea" id="RHEA-COMP:9945"/>
        <dbReference type="ChEBI" id="CHEBI:57705"/>
        <dbReference type="ChEBI" id="CHEBI:64479"/>
        <dbReference type="ChEBI" id="CHEBI:78827"/>
        <dbReference type="ChEBI" id="CHEBI:173225"/>
        <dbReference type="EC" id="2.3.1.129"/>
    </reaction>
</comment>
<comment type="pathway">
    <text evidence="1">Glycolipid biosynthesis; lipid IV(A) biosynthesis; lipid IV(A) from (3R)-3-hydroxytetradecanoyl-[acyl-carrier-protein] and UDP-N-acetyl-alpha-D-glucosamine: step 1/6.</text>
</comment>
<comment type="subunit">
    <text evidence="1">Homotrimer.</text>
</comment>
<comment type="subcellular location">
    <subcellularLocation>
        <location evidence="1">Cytoplasm</location>
    </subcellularLocation>
</comment>
<comment type="similarity">
    <text evidence="1">Belongs to the transferase hexapeptide repeat family. LpxA subfamily.</text>
</comment>
<evidence type="ECO:0000255" key="1">
    <source>
        <dbReference type="HAMAP-Rule" id="MF_00387"/>
    </source>
</evidence>
<evidence type="ECO:0007829" key="2">
    <source>
        <dbReference type="PDB" id="3R0S"/>
    </source>
</evidence>
<accession>Q9PIM1</accession>
<accession>Q0PBN1</accession>
<reference key="1">
    <citation type="journal article" date="2000" name="Nature">
        <title>The genome sequence of the food-borne pathogen Campylobacter jejuni reveals hypervariable sequences.</title>
        <authorList>
            <person name="Parkhill J."/>
            <person name="Wren B.W."/>
            <person name="Mungall K.L."/>
            <person name="Ketley J.M."/>
            <person name="Churcher C.M."/>
            <person name="Basham D."/>
            <person name="Chillingworth T."/>
            <person name="Davies R.M."/>
            <person name="Feltwell T."/>
            <person name="Holroyd S."/>
            <person name="Jagels K."/>
            <person name="Karlyshev A.V."/>
            <person name="Moule S."/>
            <person name="Pallen M.J."/>
            <person name="Penn C.W."/>
            <person name="Quail M.A."/>
            <person name="Rajandream M.A."/>
            <person name="Rutherford K.M."/>
            <person name="van Vliet A.H.M."/>
            <person name="Whitehead S."/>
            <person name="Barrell B.G."/>
        </authorList>
    </citation>
    <scope>NUCLEOTIDE SEQUENCE [LARGE SCALE GENOMIC DNA]</scope>
    <source>
        <strain>ATCC 700819 / NCTC 11168</strain>
    </source>
</reference>
<proteinExistence type="evidence at protein level"/>
<gene>
    <name evidence="1" type="primary">lpxA</name>
    <name type="ordered locus">Cj0274</name>
</gene>
<protein>
    <recommendedName>
        <fullName evidence="1">Acyl-[acyl-carrier-protein]--UDP-N-acetylglucosamine O-acyltransferase</fullName>
        <shortName evidence="1">UDP-N-acetylglucosamine acyltransferase</shortName>
        <ecNumber evidence="1">2.3.1.129</ecNumber>
    </recommendedName>
</protein>
<sequence>MKKIHPSAVIEEGAQLGDDVVIEAYAYVSKDAKIGNNVVIKQGARILSDTTIGDHSRVFSYAIVGDIPQDISYKEEQKSGVVIGKNATIREFATINSGTAKGDGFTRIGDNAFIMAYCHIAHDCLLGNNIILANNATLAGHVELGDFTVVGGLTPIHQFVKVGEGCMIAGASALSQDIVPFCLAEGNRASIRSLNLVGIRRRFDKDEVDRLSRAFKTLFRQGDLKENAKNLLENQESENVKKMCHFILETKRGIPVYRGKNNA</sequence>
<organism>
    <name type="scientific">Campylobacter jejuni subsp. jejuni serotype O:2 (strain ATCC 700819 / NCTC 11168)</name>
    <dbReference type="NCBI Taxonomy" id="192222"/>
    <lineage>
        <taxon>Bacteria</taxon>
        <taxon>Pseudomonadati</taxon>
        <taxon>Campylobacterota</taxon>
        <taxon>Epsilonproteobacteria</taxon>
        <taxon>Campylobacterales</taxon>
        <taxon>Campylobacteraceae</taxon>
        <taxon>Campylobacter</taxon>
    </lineage>
</organism>
<name>LPXA_CAMJE</name>